<comment type="function">
    <text evidence="1">Catalyzes a trans-dehydration via an enolate intermediate.</text>
</comment>
<comment type="catalytic activity">
    <reaction evidence="1">
        <text>3-dehydroquinate = 3-dehydroshikimate + H2O</text>
        <dbReference type="Rhea" id="RHEA:21096"/>
        <dbReference type="ChEBI" id="CHEBI:15377"/>
        <dbReference type="ChEBI" id="CHEBI:16630"/>
        <dbReference type="ChEBI" id="CHEBI:32364"/>
        <dbReference type="EC" id="4.2.1.10"/>
    </reaction>
</comment>
<comment type="pathway">
    <text evidence="1">Metabolic intermediate biosynthesis; chorismate biosynthesis; chorismate from D-erythrose 4-phosphate and phosphoenolpyruvate: step 3/7.</text>
</comment>
<comment type="subunit">
    <text evidence="1">Homododecamer.</text>
</comment>
<comment type="similarity">
    <text evidence="1">Belongs to the type-II 3-dehydroquinase family.</text>
</comment>
<evidence type="ECO:0000255" key="1">
    <source>
        <dbReference type="HAMAP-Rule" id="MF_00169"/>
    </source>
</evidence>
<keyword id="KW-0028">Amino-acid biosynthesis</keyword>
<keyword id="KW-0057">Aromatic amino acid biosynthesis</keyword>
<keyword id="KW-0456">Lyase</keyword>
<organism>
    <name type="scientific">Bacillus mycoides (strain KBAB4)</name>
    <name type="common">Bacillus weihenstephanensis</name>
    <dbReference type="NCBI Taxonomy" id="315730"/>
    <lineage>
        <taxon>Bacteria</taxon>
        <taxon>Bacillati</taxon>
        <taxon>Bacillota</taxon>
        <taxon>Bacilli</taxon>
        <taxon>Bacillales</taxon>
        <taxon>Bacillaceae</taxon>
        <taxon>Bacillus</taxon>
        <taxon>Bacillus cereus group</taxon>
    </lineage>
</organism>
<accession>A9VGY2</accession>
<reference key="1">
    <citation type="journal article" date="2008" name="Chem. Biol. Interact.">
        <title>Extending the Bacillus cereus group genomics to putative food-borne pathogens of different toxicity.</title>
        <authorList>
            <person name="Lapidus A."/>
            <person name="Goltsman E."/>
            <person name="Auger S."/>
            <person name="Galleron N."/>
            <person name="Segurens B."/>
            <person name="Dossat C."/>
            <person name="Land M.L."/>
            <person name="Broussolle V."/>
            <person name="Brillard J."/>
            <person name="Guinebretiere M.-H."/>
            <person name="Sanchis V."/>
            <person name="Nguen-the C."/>
            <person name="Lereclus D."/>
            <person name="Richardson P."/>
            <person name="Wincker P."/>
            <person name="Weissenbach J."/>
            <person name="Ehrlich S.D."/>
            <person name="Sorokin A."/>
        </authorList>
    </citation>
    <scope>NUCLEOTIDE SEQUENCE [LARGE SCALE GENOMIC DNA]</scope>
    <source>
        <strain>KBAB4</strain>
    </source>
</reference>
<name>AROQ_BACMK</name>
<protein>
    <recommendedName>
        <fullName evidence="1">3-dehydroquinate dehydratase</fullName>
        <shortName evidence="1">3-dehydroquinase</shortName>
        <ecNumber evidence="1">4.2.1.10</ecNumber>
    </recommendedName>
    <alternativeName>
        <fullName evidence="1">Type II DHQase</fullName>
    </alternativeName>
</protein>
<feature type="chain" id="PRO_1000097592" description="3-dehydroquinate dehydratase">
    <location>
        <begin position="1"/>
        <end position="146"/>
    </location>
</feature>
<feature type="active site" description="Proton acceptor" evidence="1">
    <location>
        <position position="23"/>
    </location>
</feature>
<feature type="active site" description="Proton donor" evidence="1">
    <location>
        <position position="100"/>
    </location>
</feature>
<feature type="binding site" evidence="1">
    <location>
        <position position="74"/>
    </location>
    <ligand>
        <name>substrate</name>
    </ligand>
</feature>
<feature type="binding site" evidence="1">
    <location>
        <position position="80"/>
    </location>
    <ligand>
        <name>substrate</name>
    </ligand>
</feature>
<feature type="binding site" evidence="1">
    <location>
        <position position="87"/>
    </location>
    <ligand>
        <name>substrate</name>
    </ligand>
</feature>
<feature type="binding site" evidence="1">
    <location>
        <begin position="101"/>
        <end position="102"/>
    </location>
    <ligand>
        <name>substrate</name>
    </ligand>
</feature>
<feature type="binding site" evidence="1">
    <location>
        <position position="111"/>
    </location>
    <ligand>
        <name>substrate</name>
    </ligand>
</feature>
<feature type="site" description="Transition state stabilizer" evidence="1">
    <location>
        <position position="18"/>
    </location>
</feature>
<proteinExistence type="inferred from homology"/>
<gene>
    <name evidence="1" type="primary">aroQ</name>
    <name type="ordered locus">BcerKBAB4_4052</name>
</gene>
<dbReference type="EC" id="4.2.1.10" evidence="1"/>
<dbReference type="EMBL" id="CP000903">
    <property type="protein sequence ID" value="ABY45214.1"/>
    <property type="molecule type" value="Genomic_DNA"/>
</dbReference>
<dbReference type="RefSeq" id="WP_002015049.1">
    <property type="nucleotide sequence ID" value="NC_010184.1"/>
</dbReference>
<dbReference type="SMR" id="A9VGY2"/>
<dbReference type="GeneID" id="66266223"/>
<dbReference type="KEGG" id="bwe:BcerKBAB4_4052"/>
<dbReference type="eggNOG" id="COG0757">
    <property type="taxonomic scope" value="Bacteria"/>
</dbReference>
<dbReference type="HOGENOM" id="CLU_090968_3_0_9"/>
<dbReference type="UniPathway" id="UPA00053">
    <property type="reaction ID" value="UER00086"/>
</dbReference>
<dbReference type="Proteomes" id="UP000002154">
    <property type="component" value="Chromosome"/>
</dbReference>
<dbReference type="GO" id="GO:0003855">
    <property type="term" value="F:3-dehydroquinate dehydratase activity"/>
    <property type="evidence" value="ECO:0007669"/>
    <property type="project" value="UniProtKB-UniRule"/>
</dbReference>
<dbReference type="GO" id="GO:0008652">
    <property type="term" value="P:amino acid biosynthetic process"/>
    <property type="evidence" value="ECO:0007669"/>
    <property type="project" value="UniProtKB-KW"/>
</dbReference>
<dbReference type="GO" id="GO:0009073">
    <property type="term" value="P:aromatic amino acid family biosynthetic process"/>
    <property type="evidence" value="ECO:0007669"/>
    <property type="project" value="UniProtKB-KW"/>
</dbReference>
<dbReference type="GO" id="GO:0009423">
    <property type="term" value="P:chorismate biosynthetic process"/>
    <property type="evidence" value="ECO:0007669"/>
    <property type="project" value="UniProtKB-UniRule"/>
</dbReference>
<dbReference type="GO" id="GO:0019631">
    <property type="term" value="P:quinate catabolic process"/>
    <property type="evidence" value="ECO:0007669"/>
    <property type="project" value="TreeGrafter"/>
</dbReference>
<dbReference type="CDD" id="cd00466">
    <property type="entry name" value="DHQase_II"/>
    <property type="match status" value="1"/>
</dbReference>
<dbReference type="Gene3D" id="3.40.50.9100">
    <property type="entry name" value="Dehydroquinase, class II"/>
    <property type="match status" value="1"/>
</dbReference>
<dbReference type="HAMAP" id="MF_00169">
    <property type="entry name" value="AroQ"/>
    <property type="match status" value="1"/>
</dbReference>
<dbReference type="InterPro" id="IPR001874">
    <property type="entry name" value="DHquinase_II"/>
</dbReference>
<dbReference type="InterPro" id="IPR018509">
    <property type="entry name" value="DHquinase_II_CS"/>
</dbReference>
<dbReference type="InterPro" id="IPR036441">
    <property type="entry name" value="DHquinase_II_sf"/>
</dbReference>
<dbReference type="NCBIfam" id="TIGR01088">
    <property type="entry name" value="aroQ"/>
    <property type="match status" value="1"/>
</dbReference>
<dbReference type="NCBIfam" id="NF003805">
    <property type="entry name" value="PRK05395.1-2"/>
    <property type="match status" value="1"/>
</dbReference>
<dbReference type="NCBIfam" id="NF003806">
    <property type="entry name" value="PRK05395.1-3"/>
    <property type="match status" value="1"/>
</dbReference>
<dbReference type="NCBIfam" id="NF003807">
    <property type="entry name" value="PRK05395.1-4"/>
    <property type="match status" value="1"/>
</dbReference>
<dbReference type="PANTHER" id="PTHR21272">
    <property type="entry name" value="CATABOLIC 3-DEHYDROQUINASE"/>
    <property type="match status" value="1"/>
</dbReference>
<dbReference type="PANTHER" id="PTHR21272:SF3">
    <property type="entry name" value="CATABOLIC 3-DEHYDROQUINASE"/>
    <property type="match status" value="1"/>
</dbReference>
<dbReference type="Pfam" id="PF01220">
    <property type="entry name" value="DHquinase_II"/>
    <property type="match status" value="1"/>
</dbReference>
<dbReference type="PIRSF" id="PIRSF001399">
    <property type="entry name" value="DHquinase_II"/>
    <property type="match status" value="1"/>
</dbReference>
<dbReference type="SUPFAM" id="SSF52304">
    <property type="entry name" value="Type II 3-dehydroquinate dehydratase"/>
    <property type="match status" value="1"/>
</dbReference>
<dbReference type="PROSITE" id="PS01029">
    <property type="entry name" value="DEHYDROQUINASE_II"/>
    <property type="match status" value="1"/>
</dbReference>
<sequence>MKKLLLVNGPNLNRLGVREVNVYGKGTLATLETDMKHEAEKMGVELECFQSNHEGAIIDRLHEAEDIYEGIILNPGAFTHYSYAIRDAIASISIPVIEVHISNIHQRESFRHESVTAAVCAGQIVGFGFYGYKLALFALMEKLREA</sequence>